<sequence length="122" mass="13464">MIKKLDRDAARQKKHMRIRKRVKGTEERPRLCVFRSLNHIYAQVVNDVTGRTLVAASSLDGEFKAANVSGGNIEGAKKVGELIAKKALEKGIDKVVFDRGGYIYHGRIAALAEAAREAGLQF</sequence>
<gene>
    <name evidence="1" type="primary">rplR</name>
    <name type="ordered locus">Helmi_13460</name>
    <name type="ORF">HM1_1394</name>
</gene>
<protein>
    <recommendedName>
        <fullName evidence="1">Large ribosomal subunit protein uL18</fullName>
    </recommendedName>
    <alternativeName>
        <fullName evidence="2">50S ribosomal protein L18</fullName>
    </alternativeName>
</protein>
<dbReference type="EMBL" id="CP000930">
    <property type="protein sequence ID" value="ABZ83971.1"/>
    <property type="molecule type" value="Genomic_DNA"/>
</dbReference>
<dbReference type="RefSeq" id="WP_012282487.1">
    <property type="nucleotide sequence ID" value="NC_010337.2"/>
</dbReference>
<dbReference type="SMR" id="B0TC72"/>
<dbReference type="STRING" id="498761.HM1_1394"/>
<dbReference type="KEGG" id="hmo:HM1_1394"/>
<dbReference type="eggNOG" id="COG0256">
    <property type="taxonomic scope" value="Bacteria"/>
</dbReference>
<dbReference type="HOGENOM" id="CLU_098841_0_1_9"/>
<dbReference type="OrthoDB" id="9810939at2"/>
<dbReference type="Proteomes" id="UP000008550">
    <property type="component" value="Chromosome"/>
</dbReference>
<dbReference type="GO" id="GO:0022625">
    <property type="term" value="C:cytosolic large ribosomal subunit"/>
    <property type="evidence" value="ECO:0007669"/>
    <property type="project" value="TreeGrafter"/>
</dbReference>
<dbReference type="GO" id="GO:0008097">
    <property type="term" value="F:5S rRNA binding"/>
    <property type="evidence" value="ECO:0007669"/>
    <property type="project" value="TreeGrafter"/>
</dbReference>
<dbReference type="GO" id="GO:0003735">
    <property type="term" value="F:structural constituent of ribosome"/>
    <property type="evidence" value="ECO:0007669"/>
    <property type="project" value="InterPro"/>
</dbReference>
<dbReference type="GO" id="GO:0006412">
    <property type="term" value="P:translation"/>
    <property type="evidence" value="ECO:0007669"/>
    <property type="project" value="UniProtKB-UniRule"/>
</dbReference>
<dbReference type="CDD" id="cd00432">
    <property type="entry name" value="Ribosomal_L18_L5e"/>
    <property type="match status" value="1"/>
</dbReference>
<dbReference type="FunFam" id="3.30.420.100:FF:000001">
    <property type="entry name" value="50S ribosomal protein L18"/>
    <property type="match status" value="1"/>
</dbReference>
<dbReference type="Gene3D" id="3.30.420.100">
    <property type="match status" value="1"/>
</dbReference>
<dbReference type="HAMAP" id="MF_01337_B">
    <property type="entry name" value="Ribosomal_uL18_B"/>
    <property type="match status" value="1"/>
</dbReference>
<dbReference type="InterPro" id="IPR004389">
    <property type="entry name" value="Ribosomal_uL18_bac-type"/>
</dbReference>
<dbReference type="InterPro" id="IPR005484">
    <property type="entry name" value="Ribosomal_uL18_bac/euk"/>
</dbReference>
<dbReference type="NCBIfam" id="TIGR00060">
    <property type="entry name" value="L18_bact"/>
    <property type="match status" value="1"/>
</dbReference>
<dbReference type="PANTHER" id="PTHR12899">
    <property type="entry name" value="39S RIBOSOMAL PROTEIN L18, MITOCHONDRIAL"/>
    <property type="match status" value="1"/>
</dbReference>
<dbReference type="PANTHER" id="PTHR12899:SF3">
    <property type="entry name" value="LARGE RIBOSOMAL SUBUNIT PROTEIN UL18M"/>
    <property type="match status" value="1"/>
</dbReference>
<dbReference type="Pfam" id="PF00861">
    <property type="entry name" value="Ribosomal_L18p"/>
    <property type="match status" value="1"/>
</dbReference>
<dbReference type="SUPFAM" id="SSF53137">
    <property type="entry name" value="Translational machinery components"/>
    <property type="match status" value="1"/>
</dbReference>
<comment type="function">
    <text evidence="1">This is one of the proteins that bind and probably mediate the attachment of the 5S RNA into the large ribosomal subunit, where it forms part of the central protuberance.</text>
</comment>
<comment type="subunit">
    <text evidence="1">Part of the 50S ribosomal subunit; part of the 5S rRNA/L5/L18/L25 subcomplex. Contacts the 5S and 23S rRNAs.</text>
</comment>
<comment type="similarity">
    <text evidence="1">Belongs to the universal ribosomal protein uL18 family.</text>
</comment>
<feature type="chain" id="PRO_1000142673" description="Large ribosomal subunit protein uL18">
    <location>
        <begin position="1"/>
        <end position="122"/>
    </location>
</feature>
<keyword id="KW-1185">Reference proteome</keyword>
<keyword id="KW-0687">Ribonucleoprotein</keyword>
<keyword id="KW-0689">Ribosomal protein</keyword>
<keyword id="KW-0694">RNA-binding</keyword>
<keyword id="KW-0699">rRNA-binding</keyword>
<accession>B0TC72</accession>
<proteinExistence type="inferred from homology"/>
<evidence type="ECO:0000255" key="1">
    <source>
        <dbReference type="HAMAP-Rule" id="MF_01337"/>
    </source>
</evidence>
<evidence type="ECO:0000305" key="2"/>
<reference key="1">
    <citation type="journal article" date="2008" name="J. Bacteriol.">
        <title>The genome of Heliobacterium modesticaldum, a phototrophic representative of the Firmicutes containing the simplest photosynthetic apparatus.</title>
        <authorList>
            <person name="Sattley W.M."/>
            <person name="Madigan M.T."/>
            <person name="Swingley W.D."/>
            <person name="Cheung P.C."/>
            <person name="Clocksin K.M."/>
            <person name="Conrad A.L."/>
            <person name="Dejesa L.C."/>
            <person name="Honchak B.M."/>
            <person name="Jung D.O."/>
            <person name="Karbach L.E."/>
            <person name="Kurdoglu A."/>
            <person name="Lahiri S."/>
            <person name="Mastrian S.D."/>
            <person name="Page L.E."/>
            <person name="Taylor H.L."/>
            <person name="Wang Z.T."/>
            <person name="Raymond J."/>
            <person name="Chen M."/>
            <person name="Blankenship R.E."/>
            <person name="Touchman J.W."/>
        </authorList>
    </citation>
    <scope>NUCLEOTIDE SEQUENCE [LARGE SCALE GENOMIC DNA]</scope>
    <source>
        <strain>ATCC 51547 / Ice1</strain>
    </source>
</reference>
<organism>
    <name type="scientific">Heliobacterium modesticaldum (strain ATCC 51547 / Ice1)</name>
    <dbReference type="NCBI Taxonomy" id="498761"/>
    <lineage>
        <taxon>Bacteria</taxon>
        <taxon>Bacillati</taxon>
        <taxon>Bacillota</taxon>
        <taxon>Clostridia</taxon>
        <taxon>Eubacteriales</taxon>
        <taxon>Heliobacteriaceae</taxon>
        <taxon>Heliomicrobium</taxon>
    </lineage>
</organism>
<name>RL18_HELMI</name>